<reference key="1">
    <citation type="submission" date="2009-01" db="EMBL/GenBank/DDBJ databases">
        <title>Complete sequence of chromosome of Methylobacterium nodulans ORS 2060.</title>
        <authorList>
            <consortium name="US DOE Joint Genome Institute"/>
            <person name="Lucas S."/>
            <person name="Copeland A."/>
            <person name="Lapidus A."/>
            <person name="Glavina del Rio T."/>
            <person name="Dalin E."/>
            <person name="Tice H."/>
            <person name="Bruce D."/>
            <person name="Goodwin L."/>
            <person name="Pitluck S."/>
            <person name="Sims D."/>
            <person name="Brettin T."/>
            <person name="Detter J.C."/>
            <person name="Han C."/>
            <person name="Larimer F."/>
            <person name="Land M."/>
            <person name="Hauser L."/>
            <person name="Kyrpides N."/>
            <person name="Ivanova N."/>
            <person name="Marx C.J."/>
            <person name="Richardson P."/>
        </authorList>
    </citation>
    <scope>NUCLEOTIDE SEQUENCE [LARGE SCALE GENOMIC DNA]</scope>
    <source>
        <strain>LMG 21967 / CNCM I-2342 / ORS 2060</strain>
    </source>
</reference>
<organism>
    <name type="scientific">Methylobacterium nodulans (strain LMG 21967 / CNCM I-2342 / ORS 2060)</name>
    <dbReference type="NCBI Taxonomy" id="460265"/>
    <lineage>
        <taxon>Bacteria</taxon>
        <taxon>Pseudomonadati</taxon>
        <taxon>Pseudomonadota</taxon>
        <taxon>Alphaproteobacteria</taxon>
        <taxon>Hyphomicrobiales</taxon>
        <taxon>Methylobacteriaceae</taxon>
        <taxon>Methylobacterium</taxon>
    </lineage>
</organism>
<proteinExistence type="inferred from homology"/>
<gene>
    <name evidence="1" type="primary">rsmH</name>
    <name type="synonym">mraW</name>
    <name type="ordered locus">Mnod_5471</name>
</gene>
<name>RSMH_METNO</name>
<dbReference type="EC" id="2.1.1.199" evidence="1"/>
<dbReference type="EMBL" id="CP001349">
    <property type="protein sequence ID" value="ACL60315.1"/>
    <property type="molecule type" value="Genomic_DNA"/>
</dbReference>
<dbReference type="RefSeq" id="WP_015931922.1">
    <property type="nucleotide sequence ID" value="NC_011894.1"/>
</dbReference>
<dbReference type="SMR" id="B8IMX2"/>
<dbReference type="STRING" id="460265.Mnod_5471"/>
<dbReference type="KEGG" id="mno:Mnod_5471"/>
<dbReference type="eggNOG" id="COG0275">
    <property type="taxonomic scope" value="Bacteria"/>
</dbReference>
<dbReference type="HOGENOM" id="CLU_038422_1_1_5"/>
<dbReference type="OrthoDB" id="9806637at2"/>
<dbReference type="Proteomes" id="UP000008207">
    <property type="component" value="Chromosome"/>
</dbReference>
<dbReference type="GO" id="GO:0005737">
    <property type="term" value="C:cytoplasm"/>
    <property type="evidence" value="ECO:0007669"/>
    <property type="project" value="UniProtKB-SubCell"/>
</dbReference>
<dbReference type="GO" id="GO:0071424">
    <property type="term" value="F:rRNA (cytosine-N4-)-methyltransferase activity"/>
    <property type="evidence" value="ECO:0007669"/>
    <property type="project" value="UniProtKB-UniRule"/>
</dbReference>
<dbReference type="GO" id="GO:0070475">
    <property type="term" value="P:rRNA base methylation"/>
    <property type="evidence" value="ECO:0007669"/>
    <property type="project" value="UniProtKB-UniRule"/>
</dbReference>
<dbReference type="FunFam" id="1.10.150.170:FF:000003">
    <property type="entry name" value="Ribosomal RNA small subunit methyltransferase H"/>
    <property type="match status" value="1"/>
</dbReference>
<dbReference type="Gene3D" id="1.10.150.170">
    <property type="entry name" value="Putative methyltransferase TM0872, insert domain"/>
    <property type="match status" value="1"/>
</dbReference>
<dbReference type="Gene3D" id="3.40.50.150">
    <property type="entry name" value="Vaccinia Virus protein VP39"/>
    <property type="match status" value="1"/>
</dbReference>
<dbReference type="HAMAP" id="MF_01007">
    <property type="entry name" value="16SrRNA_methyltr_H"/>
    <property type="match status" value="1"/>
</dbReference>
<dbReference type="InterPro" id="IPR002903">
    <property type="entry name" value="RsmH"/>
</dbReference>
<dbReference type="InterPro" id="IPR023397">
    <property type="entry name" value="SAM-dep_MeTrfase_MraW_recog"/>
</dbReference>
<dbReference type="InterPro" id="IPR029063">
    <property type="entry name" value="SAM-dependent_MTases_sf"/>
</dbReference>
<dbReference type="NCBIfam" id="TIGR00006">
    <property type="entry name" value="16S rRNA (cytosine(1402)-N(4))-methyltransferase RsmH"/>
    <property type="match status" value="1"/>
</dbReference>
<dbReference type="PANTHER" id="PTHR11265:SF0">
    <property type="entry name" value="12S RRNA N4-METHYLCYTIDINE METHYLTRANSFERASE"/>
    <property type="match status" value="1"/>
</dbReference>
<dbReference type="PANTHER" id="PTHR11265">
    <property type="entry name" value="S-ADENOSYL-METHYLTRANSFERASE MRAW"/>
    <property type="match status" value="1"/>
</dbReference>
<dbReference type="Pfam" id="PF01795">
    <property type="entry name" value="Methyltransf_5"/>
    <property type="match status" value="1"/>
</dbReference>
<dbReference type="PIRSF" id="PIRSF004486">
    <property type="entry name" value="MraW"/>
    <property type="match status" value="1"/>
</dbReference>
<dbReference type="SUPFAM" id="SSF81799">
    <property type="entry name" value="Putative methyltransferase TM0872, insert domain"/>
    <property type="match status" value="1"/>
</dbReference>
<dbReference type="SUPFAM" id="SSF53335">
    <property type="entry name" value="S-adenosyl-L-methionine-dependent methyltransferases"/>
    <property type="match status" value="1"/>
</dbReference>
<keyword id="KW-0963">Cytoplasm</keyword>
<keyword id="KW-0489">Methyltransferase</keyword>
<keyword id="KW-1185">Reference proteome</keyword>
<keyword id="KW-0698">rRNA processing</keyword>
<keyword id="KW-0949">S-adenosyl-L-methionine</keyword>
<keyword id="KW-0808">Transferase</keyword>
<protein>
    <recommendedName>
        <fullName evidence="1">Ribosomal RNA small subunit methyltransferase H</fullName>
        <ecNumber evidence="1">2.1.1.199</ecNumber>
    </recommendedName>
    <alternativeName>
        <fullName evidence="1">16S rRNA m(4)C1402 methyltransferase</fullName>
    </alternativeName>
    <alternativeName>
        <fullName evidence="1">rRNA (cytosine-N(4)-)-methyltransferase RsmH</fullName>
    </alternativeName>
</protein>
<evidence type="ECO:0000255" key="1">
    <source>
        <dbReference type="HAMAP-Rule" id="MF_01007"/>
    </source>
</evidence>
<evidence type="ECO:0000256" key="2">
    <source>
        <dbReference type="SAM" id="MobiDB-lite"/>
    </source>
</evidence>
<accession>B8IMX2</accession>
<sequence length="339" mass="36071">MSGMPPHIPVLLKEVRSALRLGEGPGIVVDGTFGAGGYTRAILEADPGQRVIAIDRDPTAIATGRGLAAAMAGRLMLVQGRFGELDRLVRAQGIETVDGVVLDIGVSSMQLDQAQRGFSFRQDGPLDMRMESGGTSAADLVNEASEAELADIIYHYGEERRARAVARAILEARRRGRIATTATLAEIVASVVRPEPGSGIHPATRTFQALRIAVNDELGELQRALHAAERILRPGGRLAVVTFHSLEDRIVKQFFSARSGRAVSASRHLPMAEKPAPRSFTLVTKGPIGPSEAEATANPRARSAKLRAGERTDAPIPEPLTALAALAALPSRERGGGRR</sequence>
<feature type="chain" id="PRO_0000386976" description="Ribosomal RNA small subunit methyltransferase H">
    <location>
        <begin position="1"/>
        <end position="339"/>
    </location>
</feature>
<feature type="region of interest" description="Disordered" evidence="2">
    <location>
        <begin position="286"/>
        <end position="319"/>
    </location>
</feature>
<feature type="binding site" evidence="1">
    <location>
        <begin position="36"/>
        <end position="38"/>
    </location>
    <ligand>
        <name>S-adenosyl-L-methionine</name>
        <dbReference type="ChEBI" id="CHEBI:59789"/>
    </ligand>
</feature>
<feature type="binding site" evidence="1">
    <location>
        <position position="55"/>
    </location>
    <ligand>
        <name>S-adenosyl-L-methionine</name>
        <dbReference type="ChEBI" id="CHEBI:59789"/>
    </ligand>
</feature>
<feature type="binding site" evidence="1">
    <location>
        <position position="82"/>
    </location>
    <ligand>
        <name>S-adenosyl-L-methionine</name>
        <dbReference type="ChEBI" id="CHEBI:59789"/>
    </ligand>
</feature>
<feature type="binding site" evidence="1">
    <location>
        <position position="103"/>
    </location>
    <ligand>
        <name>S-adenosyl-L-methionine</name>
        <dbReference type="ChEBI" id="CHEBI:59789"/>
    </ligand>
</feature>
<feature type="binding site" evidence="1">
    <location>
        <position position="110"/>
    </location>
    <ligand>
        <name>S-adenosyl-L-methionine</name>
        <dbReference type="ChEBI" id="CHEBI:59789"/>
    </ligand>
</feature>
<comment type="function">
    <text evidence="1">Specifically methylates the N4 position of cytidine in position 1402 (C1402) of 16S rRNA.</text>
</comment>
<comment type="catalytic activity">
    <reaction evidence="1">
        <text>cytidine(1402) in 16S rRNA + S-adenosyl-L-methionine = N(4)-methylcytidine(1402) in 16S rRNA + S-adenosyl-L-homocysteine + H(+)</text>
        <dbReference type="Rhea" id="RHEA:42928"/>
        <dbReference type="Rhea" id="RHEA-COMP:10286"/>
        <dbReference type="Rhea" id="RHEA-COMP:10287"/>
        <dbReference type="ChEBI" id="CHEBI:15378"/>
        <dbReference type="ChEBI" id="CHEBI:57856"/>
        <dbReference type="ChEBI" id="CHEBI:59789"/>
        <dbReference type="ChEBI" id="CHEBI:74506"/>
        <dbReference type="ChEBI" id="CHEBI:82748"/>
        <dbReference type="EC" id="2.1.1.199"/>
    </reaction>
</comment>
<comment type="subcellular location">
    <subcellularLocation>
        <location evidence="1">Cytoplasm</location>
    </subcellularLocation>
</comment>
<comment type="similarity">
    <text evidence="1">Belongs to the methyltransferase superfamily. RsmH family.</text>
</comment>